<evidence type="ECO:0000255" key="1">
    <source>
        <dbReference type="HAMAP-Rule" id="MF_00607"/>
    </source>
</evidence>
<sequence>MNSSFSAPAKKSLGQHFLADRYYIDRIVQAVDPRAGQHLVEIGPGQGAITFPLLRKHGALTVIEFDRDLIAPLTEAAAPIGALSIIHRDVLSVDFTALADGTPIRLVGNLPYNISSPILFHALDHAAVVADMHFMLQKEVVDRMAAGPGSKVYGRLSVMLQAYCDVTALFVVPPGAFRPPPKVDSAVVRLVPRDPATVHINDRRRFADVVRAGFGQRRKTLRNALSTVCEPAHFEAAQVRPDARAEQLEVADFIRLANVEPA</sequence>
<proteinExistence type="inferred from homology"/>
<comment type="function">
    <text evidence="1">Specifically dimethylates two adjacent adenosines (A1518 and A1519) in the loop of a conserved hairpin near the 3'-end of 16S rRNA in the 30S particle. May play a critical role in biogenesis of 30S subunits.</text>
</comment>
<comment type="catalytic activity">
    <reaction evidence="1">
        <text>adenosine(1518)/adenosine(1519) in 16S rRNA + 4 S-adenosyl-L-methionine = N(6)-dimethyladenosine(1518)/N(6)-dimethyladenosine(1519) in 16S rRNA + 4 S-adenosyl-L-homocysteine + 4 H(+)</text>
        <dbReference type="Rhea" id="RHEA:19609"/>
        <dbReference type="Rhea" id="RHEA-COMP:10232"/>
        <dbReference type="Rhea" id="RHEA-COMP:10233"/>
        <dbReference type="ChEBI" id="CHEBI:15378"/>
        <dbReference type="ChEBI" id="CHEBI:57856"/>
        <dbReference type="ChEBI" id="CHEBI:59789"/>
        <dbReference type="ChEBI" id="CHEBI:74411"/>
        <dbReference type="ChEBI" id="CHEBI:74493"/>
        <dbReference type="EC" id="2.1.1.182"/>
    </reaction>
</comment>
<comment type="subcellular location">
    <subcellularLocation>
        <location evidence="1">Cytoplasm</location>
    </subcellularLocation>
</comment>
<comment type="similarity">
    <text evidence="1">Belongs to the class I-like SAM-binding methyltransferase superfamily. rRNA adenine N(6)-methyltransferase family. RsmA subfamily.</text>
</comment>
<organism>
    <name type="scientific">Xanthomonas oryzae pv. oryzae (strain PXO99A)</name>
    <dbReference type="NCBI Taxonomy" id="360094"/>
    <lineage>
        <taxon>Bacteria</taxon>
        <taxon>Pseudomonadati</taxon>
        <taxon>Pseudomonadota</taxon>
        <taxon>Gammaproteobacteria</taxon>
        <taxon>Lysobacterales</taxon>
        <taxon>Lysobacteraceae</taxon>
        <taxon>Xanthomonas</taxon>
    </lineage>
</organism>
<gene>
    <name evidence="1" type="primary">rsmA</name>
    <name evidence="1" type="synonym">ksgA</name>
    <name type="ordered locus">PXO_04645</name>
</gene>
<feature type="chain" id="PRO_1000130338" description="Ribosomal RNA small subunit methyltransferase A">
    <location>
        <begin position="1"/>
        <end position="262"/>
    </location>
</feature>
<feature type="binding site" evidence="1">
    <location>
        <position position="16"/>
    </location>
    <ligand>
        <name>S-adenosyl-L-methionine</name>
        <dbReference type="ChEBI" id="CHEBI:59789"/>
    </ligand>
</feature>
<feature type="binding site" evidence="1">
    <location>
        <position position="18"/>
    </location>
    <ligand>
        <name>S-adenosyl-L-methionine</name>
        <dbReference type="ChEBI" id="CHEBI:59789"/>
    </ligand>
</feature>
<feature type="binding site" evidence="1">
    <location>
        <position position="43"/>
    </location>
    <ligand>
        <name>S-adenosyl-L-methionine</name>
        <dbReference type="ChEBI" id="CHEBI:59789"/>
    </ligand>
</feature>
<feature type="binding site" evidence="1">
    <location>
        <position position="64"/>
    </location>
    <ligand>
        <name>S-adenosyl-L-methionine</name>
        <dbReference type="ChEBI" id="CHEBI:59789"/>
    </ligand>
</feature>
<feature type="binding site" evidence="1">
    <location>
        <position position="89"/>
    </location>
    <ligand>
        <name>S-adenosyl-L-methionine</name>
        <dbReference type="ChEBI" id="CHEBI:59789"/>
    </ligand>
</feature>
<feature type="binding site" evidence="1">
    <location>
        <position position="109"/>
    </location>
    <ligand>
        <name>S-adenosyl-L-methionine</name>
        <dbReference type="ChEBI" id="CHEBI:59789"/>
    </ligand>
</feature>
<dbReference type="EC" id="2.1.1.182" evidence="1"/>
<dbReference type="EMBL" id="CP000967">
    <property type="protein sequence ID" value="ACD57770.1"/>
    <property type="molecule type" value="Genomic_DNA"/>
</dbReference>
<dbReference type="RefSeq" id="WP_011260168.1">
    <property type="nucleotide sequence ID" value="NC_010717.2"/>
</dbReference>
<dbReference type="SMR" id="B2SPT3"/>
<dbReference type="KEGG" id="xop:PXO_04645"/>
<dbReference type="eggNOG" id="COG0030">
    <property type="taxonomic scope" value="Bacteria"/>
</dbReference>
<dbReference type="HOGENOM" id="CLU_041220_0_1_6"/>
<dbReference type="Proteomes" id="UP000001740">
    <property type="component" value="Chromosome"/>
</dbReference>
<dbReference type="GO" id="GO:0005829">
    <property type="term" value="C:cytosol"/>
    <property type="evidence" value="ECO:0007669"/>
    <property type="project" value="TreeGrafter"/>
</dbReference>
<dbReference type="GO" id="GO:0052908">
    <property type="term" value="F:16S rRNA (adenine(1518)-N(6)/adenine(1519)-N(6))-dimethyltransferase activity"/>
    <property type="evidence" value="ECO:0007669"/>
    <property type="project" value="UniProtKB-EC"/>
</dbReference>
<dbReference type="GO" id="GO:0003723">
    <property type="term" value="F:RNA binding"/>
    <property type="evidence" value="ECO:0007669"/>
    <property type="project" value="UniProtKB-KW"/>
</dbReference>
<dbReference type="FunFam" id="1.10.8.100:FF:000001">
    <property type="entry name" value="Ribosomal RNA small subunit methyltransferase A"/>
    <property type="match status" value="1"/>
</dbReference>
<dbReference type="FunFam" id="3.40.50.150:FF:000222">
    <property type="entry name" value="Ribosomal RNA small subunit methyltransferase A"/>
    <property type="match status" value="1"/>
</dbReference>
<dbReference type="Gene3D" id="1.10.8.100">
    <property type="entry name" value="Ribosomal RNA adenine dimethylase-like, domain 2"/>
    <property type="match status" value="1"/>
</dbReference>
<dbReference type="Gene3D" id="3.40.50.150">
    <property type="entry name" value="Vaccinia Virus protein VP39"/>
    <property type="match status" value="1"/>
</dbReference>
<dbReference type="HAMAP" id="MF_00607">
    <property type="entry name" value="16SrRNA_methyltr_A"/>
    <property type="match status" value="1"/>
</dbReference>
<dbReference type="InterPro" id="IPR001737">
    <property type="entry name" value="KsgA/Erm"/>
</dbReference>
<dbReference type="InterPro" id="IPR023165">
    <property type="entry name" value="rRNA_Ade_diMease-like_C"/>
</dbReference>
<dbReference type="InterPro" id="IPR020596">
    <property type="entry name" value="rRNA_Ade_Mease_Trfase_CS"/>
</dbReference>
<dbReference type="InterPro" id="IPR020598">
    <property type="entry name" value="rRNA_Ade_methylase_Trfase_N"/>
</dbReference>
<dbReference type="InterPro" id="IPR011530">
    <property type="entry name" value="rRNA_adenine_dimethylase"/>
</dbReference>
<dbReference type="InterPro" id="IPR029063">
    <property type="entry name" value="SAM-dependent_MTases_sf"/>
</dbReference>
<dbReference type="NCBIfam" id="TIGR00755">
    <property type="entry name" value="ksgA"/>
    <property type="match status" value="1"/>
</dbReference>
<dbReference type="PANTHER" id="PTHR11727">
    <property type="entry name" value="DIMETHYLADENOSINE TRANSFERASE"/>
    <property type="match status" value="1"/>
</dbReference>
<dbReference type="PANTHER" id="PTHR11727:SF7">
    <property type="entry name" value="DIMETHYLADENOSINE TRANSFERASE-RELATED"/>
    <property type="match status" value="1"/>
</dbReference>
<dbReference type="Pfam" id="PF00398">
    <property type="entry name" value="RrnaAD"/>
    <property type="match status" value="1"/>
</dbReference>
<dbReference type="SMART" id="SM00650">
    <property type="entry name" value="rADc"/>
    <property type="match status" value="1"/>
</dbReference>
<dbReference type="SUPFAM" id="SSF53335">
    <property type="entry name" value="S-adenosyl-L-methionine-dependent methyltransferases"/>
    <property type="match status" value="1"/>
</dbReference>
<dbReference type="PROSITE" id="PS01131">
    <property type="entry name" value="RRNA_A_DIMETH"/>
    <property type="match status" value="1"/>
</dbReference>
<dbReference type="PROSITE" id="PS51689">
    <property type="entry name" value="SAM_RNA_A_N6_MT"/>
    <property type="match status" value="1"/>
</dbReference>
<name>RSMA_XANOP</name>
<reference key="1">
    <citation type="journal article" date="2008" name="BMC Genomics">
        <title>Genome sequence and rapid evolution of the rice pathogen Xanthomonas oryzae pv. oryzae PXO99A.</title>
        <authorList>
            <person name="Salzberg S.L."/>
            <person name="Sommer D.D."/>
            <person name="Schatz M.C."/>
            <person name="Phillippy A.M."/>
            <person name="Rabinowicz P.D."/>
            <person name="Tsuge S."/>
            <person name="Furutani A."/>
            <person name="Ochiai H."/>
            <person name="Delcher A.L."/>
            <person name="Kelley D."/>
            <person name="Madupu R."/>
            <person name="Puiu D."/>
            <person name="Radune D."/>
            <person name="Shumway M."/>
            <person name="Trapnell C."/>
            <person name="Aparna G."/>
            <person name="Jha G."/>
            <person name="Pandey A."/>
            <person name="Patil P.B."/>
            <person name="Ishihara H."/>
            <person name="Meyer D.F."/>
            <person name="Szurek B."/>
            <person name="Verdier V."/>
            <person name="Koebnik R."/>
            <person name="Dow J.M."/>
            <person name="Ryan R.P."/>
            <person name="Hirata H."/>
            <person name="Tsuyumu S."/>
            <person name="Won Lee S."/>
            <person name="Seo Y.-S."/>
            <person name="Sriariyanum M."/>
            <person name="Ronald P.C."/>
            <person name="Sonti R.V."/>
            <person name="Van Sluys M.-A."/>
            <person name="Leach J.E."/>
            <person name="White F.F."/>
            <person name="Bogdanove A.J."/>
        </authorList>
    </citation>
    <scope>NUCLEOTIDE SEQUENCE [LARGE SCALE GENOMIC DNA]</scope>
    <source>
        <strain>PXO99A</strain>
    </source>
</reference>
<accession>B2SPT3</accession>
<protein>
    <recommendedName>
        <fullName evidence="1">Ribosomal RNA small subunit methyltransferase A</fullName>
        <ecNumber evidence="1">2.1.1.182</ecNumber>
    </recommendedName>
    <alternativeName>
        <fullName evidence="1">16S rRNA (adenine(1518)-N(6)/adenine(1519)-N(6))-dimethyltransferase</fullName>
    </alternativeName>
    <alternativeName>
        <fullName evidence="1">16S rRNA dimethyladenosine transferase</fullName>
    </alternativeName>
    <alternativeName>
        <fullName evidence="1">16S rRNA dimethylase</fullName>
    </alternativeName>
    <alternativeName>
        <fullName evidence="1">S-adenosylmethionine-6-N', N'-adenosyl(rRNA) dimethyltransferase</fullName>
    </alternativeName>
</protein>
<keyword id="KW-0963">Cytoplasm</keyword>
<keyword id="KW-0489">Methyltransferase</keyword>
<keyword id="KW-0694">RNA-binding</keyword>
<keyword id="KW-0698">rRNA processing</keyword>
<keyword id="KW-0949">S-adenosyl-L-methionine</keyword>
<keyword id="KW-0808">Transferase</keyword>